<gene>
    <name type="primary">tetD</name>
</gene>
<feature type="chain" id="PRO_0000194588" description="Transposon Tn10 TetD protein">
    <location>
        <begin position="1"/>
        <end position="138"/>
    </location>
</feature>
<feature type="domain" description="HTH araC/xylS-type" evidence="1">
    <location>
        <begin position="31"/>
        <end position="129"/>
    </location>
</feature>
<feature type="DNA-binding region" description="H-T-H motif" evidence="1">
    <location>
        <begin position="48"/>
        <end position="69"/>
    </location>
</feature>
<feature type="DNA-binding region" description="H-T-H motif" evidence="1">
    <location>
        <begin position="96"/>
        <end position="119"/>
    </location>
</feature>
<organism>
    <name type="scientific">Escherichia coli</name>
    <dbReference type="NCBI Taxonomy" id="562"/>
    <lineage>
        <taxon>Bacteria</taxon>
        <taxon>Pseudomonadati</taxon>
        <taxon>Pseudomonadota</taxon>
        <taxon>Gammaproteobacteria</taxon>
        <taxon>Enterobacterales</taxon>
        <taxon>Enterobacteriaceae</taxon>
        <taxon>Escherichia</taxon>
    </lineage>
</organism>
<dbReference type="EMBL" id="J01830">
    <property type="protein sequence ID" value="AAB59096.1"/>
    <property type="molecule type" value="Genomic_DNA"/>
</dbReference>
<dbReference type="SMR" id="P28816"/>
<dbReference type="GO" id="GO:0003700">
    <property type="term" value="F:DNA-binding transcription factor activity"/>
    <property type="evidence" value="ECO:0007669"/>
    <property type="project" value="InterPro"/>
</dbReference>
<dbReference type="GO" id="GO:0043565">
    <property type="term" value="F:sequence-specific DNA binding"/>
    <property type="evidence" value="ECO:0007669"/>
    <property type="project" value="InterPro"/>
</dbReference>
<dbReference type="Gene3D" id="1.10.10.60">
    <property type="entry name" value="Homeodomain-like"/>
    <property type="match status" value="2"/>
</dbReference>
<dbReference type="InterPro" id="IPR009057">
    <property type="entry name" value="Homeodomain-like_sf"/>
</dbReference>
<dbReference type="InterPro" id="IPR018060">
    <property type="entry name" value="HTH_AraC"/>
</dbReference>
<dbReference type="InterPro" id="IPR018062">
    <property type="entry name" value="HTH_AraC-typ_CS"/>
</dbReference>
<dbReference type="InterPro" id="IPR050959">
    <property type="entry name" value="MarA-like"/>
</dbReference>
<dbReference type="PANTHER" id="PTHR47504">
    <property type="entry name" value="RIGHT ORIGIN-BINDING PROTEIN"/>
    <property type="match status" value="1"/>
</dbReference>
<dbReference type="PANTHER" id="PTHR47504:SF5">
    <property type="entry name" value="RIGHT ORIGIN-BINDING PROTEIN"/>
    <property type="match status" value="1"/>
</dbReference>
<dbReference type="Pfam" id="PF12833">
    <property type="entry name" value="HTH_18"/>
    <property type="match status" value="1"/>
</dbReference>
<dbReference type="SMART" id="SM00342">
    <property type="entry name" value="HTH_ARAC"/>
    <property type="match status" value="1"/>
</dbReference>
<dbReference type="SUPFAM" id="SSF46689">
    <property type="entry name" value="Homeodomain-like"/>
    <property type="match status" value="2"/>
</dbReference>
<dbReference type="PROSITE" id="PS00041">
    <property type="entry name" value="HTH_ARAC_FAMILY_1"/>
    <property type="match status" value="1"/>
</dbReference>
<dbReference type="PROSITE" id="PS01124">
    <property type="entry name" value="HTH_ARAC_FAMILY_2"/>
    <property type="match status" value="1"/>
</dbReference>
<sequence length="138" mass="16775">MYIEQHSRYQNKANNIQLEYDDRQFHTTVIKDVLLWIEHNLDQSLLLDDVANKAGYTKWYFQRLFKKVTGVTLASYIRARRLTKAAVELRLTKKTILEIALKYQFDSQQSFTRRFKYIFKVTPSYYRRNKLWELEAMH</sequence>
<proteinExistence type="evidence at protein level"/>
<keyword id="KW-0238">DNA-binding</keyword>
<keyword id="KW-0804">Transcription</keyword>
<keyword id="KW-0805">Transcription regulation</keyword>
<keyword id="KW-0814">Transposable element</keyword>
<protein>
    <recommendedName>
        <fullName>Transposon Tn10 TetD protein</fullName>
    </recommendedName>
    <alternativeName>
        <fullName>ORFR</fullName>
    </alternativeName>
</protein>
<reference key="1">
    <citation type="journal article" date="1984" name="J. Bacteriol.">
        <title>Transposon Tn10 contains two structural genes with opposite polarity between tetA and IS10R.</title>
        <authorList>
            <person name="Schollmeier K."/>
            <person name="Hillen W."/>
        </authorList>
    </citation>
    <scope>NUCLEOTIDE SEQUENCE [GENOMIC DNA]</scope>
</reference>
<reference key="2">
    <citation type="journal article" date="1984" name="J. Bacteriol.">
        <title>Identification of additional genes on transposon Tn10: tetC and tetD.</title>
        <authorList>
            <person name="Braus G."/>
            <person name="Argast M."/>
            <person name="Beck C.F."/>
        </authorList>
    </citation>
    <scope>CHARACTERIZATION</scope>
</reference>
<name>TETD_ECOLX</name>
<evidence type="ECO:0000255" key="1">
    <source>
        <dbReference type="PROSITE-ProRule" id="PRU00593"/>
    </source>
</evidence>
<accession>P28816</accession>